<accession>Q1GIP1</accession>
<name>NUOB_RUEST</name>
<evidence type="ECO:0000250" key="1"/>
<evidence type="ECO:0000255" key="2">
    <source>
        <dbReference type="HAMAP-Rule" id="MF_01356"/>
    </source>
</evidence>
<sequence length="174" mass="19173">MAGANTAGVDKEMVTQALNAELQDKGFLLTSAEDIINWARTGSLHWMTFGLACCAVEMMHTSMPRYDAERFGIAPRASPRQSDVMIVAGTLTNKMAPALRKVYDQMPEPRYVISMGSCANGGGYYHYSYSVVRGCDRIVPVDIYVPGCPPTAEALLYGLMQLQRKIRRTGTLVR</sequence>
<organism>
    <name type="scientific">Ruegeria sp. (strain TM1040)</name>
    <name type="common">Silicibacter sp.</name>
    <dbReference type="NCBI Taxonomy" id="292414"/>
    <lineage>
        <taxon>Bacteria</taxon>
        <taxon>Pseudomonadati</taxon>
        <taxon>Pseudomonadota</taxon>
        <taxon>Alphaproteobacteria</taxon>
        <taxon>Rhodobacterales</taxon>
        <taxon>Roseobacteraceae</taxon>
        <taxon>Ruegeria</taxon>
    </lineage>
</organism>
<protein>
    <recommendedName>
        <fullName evidence="2">NADH-quinone oxidoreductase subunit B</fullName>
        <ecNumber evidence="2">7.1.1.-</ecNumber>
    </recommendedName>
    <alternativeName>
        <fullName evidence="2">NADH dehydrogenase I subunit B</fullName>
    </alternativeName>
    <alternativeName>
        <fullName evidence="2">NDH-1 subunit B</fullName>
    </alternativeName>
</protein>
<reference key="1">
    <citation type="submission" date="2006-05" db="EMBL/GenBank/DDBJ databases">
        <title>Complete sequence of chromosome of Silicibacter sp. TM1040.</title>
        <authorList>
            <consortium name="US DOE Joint Genome Institute"/>
            <person name="Copeland A."/>
            <person name="Lucas S."/>
            <person name="Lapidus A."/>
            <person name="Barry K."/>
            <person name="Detter J.C."/>
            <person name="Glavina del Rio T."/>
            <person name="Hammon N."/>
            <person name="Israni S."/>
            <person name="Dalin E."/>
            <person name="Tice H."/>
            <person name="Pitluck S."/>
            <person name="Brettin T."/>
            <person name="Bruce D."/>
            <person name="Han C."/>
            <person name="Tapia R."/>
            <person name="Goodwin L."/>
            <person name="Thompson L.S."/>
            <person name="Gilna P."/>
            <person name="Schmutz J."/>
            <person name="Larimer F."/>
            <person name="Land M."/>
            <person name="Hauser L."/>
            <person name="Kyrpides N."/>
            <person name="Kim E."/>
            <person name="Belas R."/>
            <person name="Moran M.A."/>
            <person name="Buchan A."/>
            <person name="Gonzalez J.M."/>
            <person name="Schell M.A."/>
            <person name="Sun F."/>
            <person name="Richardson P."/>
        </authorList>
    </citation>
    <scope>NUCLEOTIDE SEQUENCE [LARGE SCALE GENOMIC DNA]</scope>
    <source>
        <strain>TM1040</strain>
    </source>
</reference>
<comment type="function">
    <text evidence="1">NDH-1 shuttles electrons from NADH, via FMN and iron-sulfur (Fe-S) centers, to quinones in the respiratory chain. Couples the redox reaction to proton translocation (for every two electrons transferred, four hydrogen ions are translocated across the cytoplasmic membrane), and thus conserves the redox energy in a proton gradient (By similarity).</text>
</comment>
<comment type="catalytic activity">
    <reaction evidence="2">
        <text>a quinone + NADH + 5 H(+)(in) = a quinol + NAD(+) + 4 H(+)(out)</text>
        <dbReference type="Rhea" id="RHEA:57888"/>
        <dbReference type="ChEBI" id="CHEBI:15378"/>
        <dbReference type="ChEBI" id="CHEBI:24646"/>
        <dbReference type="ChEBI" id="CHEBI:57540"/>
        <dbReference type="ChEBI" id="CHEBI:57945"/>
        <dbReference type="ChEBI" id="CHEBI:132124"/>
    </reaction>
</comment>
<comment type="cofactor">
    <cofactor evidence="2">
        <name>[4Fe-4S] cluster</name>
        <dbReference type="ChEBI" id="CHEBI:49883"/>
    </cofactor>
    <text evidence="2">Binds 1 [4Fe-4S] cluster.</text>
</comment>
<comment type="subunit">
    <text evidence="2">NDH-1 is composed of 14 different subunits. Subunits NuoB, C, D, E, F, and G constitute the peripheral sector of the complex.</text>
</comment>
<comment type="subcellular location">
    <subcellularLocation>
        <location evidence="2">Cell inner membrane</location>
        <topology evidence="2">Peripheral membrane protein</topology>
        <orientation evidence="2">Cytoplasmic side</orientation>
    </subcellularLocation>
</comment>
<comment type="similarity">
    <text evidence="2">Belongs to the complex I 20 kDa subunit family.</text>
</comment>
<feature type="chain" id="PRO_0000358480" description="NADH-quinone oxidoreductase subunit B">
    <location>
        <begin position="1"/>
        <end position="174"/>
    </location>
</feature>
<feature type="binding site" evidence="2">
    <location>
        <position position="53"/>
    </location>
    <ligand>
        <name>[4Fe-4S] cluster</name>
        <dbReference type="ChEBI" id="CHEBI:49883"/>
    </ligand>
</feature>
<feature type="binding site" evidence="2">
    <location>
        <position position="54"/>
    </location>
    <ligand>
        <name>[4Fe-4S] cluster</name>
        <dbReference type="ChEBI" id="CHEBI:49883"/>
    </ligand>
</feature>
<feature type="binding site" evidence="2">
    <location>
        <position position="118"/>
    </location>
    <ligand>
        <name>[4Fe-4S] cluster</name>
        <dbReference type="ChEBI" id="CHEBI:49883"/>
    </ligand>
</feature>
<feature type="binding site" evidence="2">
    <location>
        <position position="148"/>
    </location>
    <ligand>
        <name>[4Fe-4S] cluster</name>
        <dbReference type="ChEBI" id="CHEBI:49883"/>
    </ligand>
</feature>
<keyword id="KW-0004">4Fe-4S</keyword>
<keyword id="KW-0997">Cell inner membrane</keyword>
<keyword id="KW-1003">Cell membrane</keyword>
<keyword id="KW-0408">Iron</keyword>
<keyword id="KW-0411">Iron-sulfur</keyword>
<keyword id="KW-0472">Membrane</keyword>
<keyword id="KW-0479">Metal-binding</keyword>
<keyword id="KW-0520">NAD</keyword>
<keyword id="KW-0874">Quinone</keyword>
<keyword id="KW-1185">Reference proteome</keyword>
<keyword id="KW-1278">Translocase</keyword>
<keyword id="KW-0813">Transport</keyword>
<keyword id="KW-0830">Ubiquinone</keyword>
<gene>
    <name evidence="2" type="primary">nuoB</name>
    <name type="ordered locus">TM1040_0742</name>
</gene>
<dbReference type="EC" id="7.1.1.-" evidence="2"/>
<dbReference type="EMBL" id="CP000377">
    <property type="protein sequence ID" value="ABF63475.1"/>
    <property type="molecule type" value="Genomic_DNA"/>
</dbReference>
<dbReference type="SMR" id="Q1GIP1"/>
<dbReference type="STRING" id="292414.TM1040_0742"/>
<dbReference type="KEGG" id="sit:TM1040_0742"/>
<dbReference type="eggNOG" id="COG0377">
    <property type="taxonomic scope" value="Bacteria"/>
</dbReference>
<dbReference type="HOGENOM" id="CLU_055737_7_0_5"/>
<dbReference type="OrthoDB" id="9786737at2"/>
<dbReference type="Proteomes" id="UP000000636">
    <property type="component" value="Chromosome"/>
</dbReference>
<dbReference type="GO" id="GO:0005886">
    <property type="term" value="C:plasma membrane"/>
    <property type="evidence" value="ECO:0007669"/>
    <property type="project" value="UniProtKB-SubCell"/>
</dbReference>
<dbReference type="GO" id="GO:0045271">
    <property type="term" value="C:respiratory chain complex I"/>
    <property type="evidence" value="ECO:0007669"/>
    <property type="project" value="TreeGrafter"/>
</dbReference>
<dbReference type="GO" id="GO:0051539">
    <property type="term" value="F:4 iron, 4 sulfur cluster binding"/>
    <property type="evidence" value="ECO:0007669"/>
    <property type="project" value="UniProtKB-KW"/>
</dbReference>
<dbReference type="GO" id="GO:0005506">
    <property type="term" value="F:iron ion binding"/>
    <property type="evidence" value="ECO:0007669"/>
    <property type="project" value="UniProtKB-UniRule"/>
</dbReference>
<dbReference type="GO" id="GO:0008137">
    <property type="term" value="F:NADH dehydrogenase (ubiquinone) activity"/>
    <property type="evidence" value="ECO:0007669"/>
    <property type="project" value="InterPro"/>
</dbReference>
<dbReference type="GO" id="GO:0050136">
    <property type="term" value="F:NADH:ubiquinone reductase (non-electrogenic) activity"/>
    <property type="evidence" value="ECO:0007669"/>
    <property type="project" value="UniProtKB-UniRule"/>
</dbReference>
<dbReference type="GO" id="GO:0048038">
    <property type="term" value="F:quinone binding"/>
    <property type="evidence" value="ECO:0007669"/>
    <property type="project" value="UniProtKB-KW"/>
</dbReference>
<dbReference type="GO" id="GO:0009060">
    <property type="term" value="P:aerobic respiration"/>
    <property type="evidence" value="ECO:0007669"/>
    <property type="project" value="TreeGrafter"/>
</dbReference>
<dbReference type="GO" id="GO:0015990">
    <property type="term" value="P:electron transport coupled proton transport"/>
    <property type="evidence" value="ECO:0007669"/>
    <property type="project" value="TreeGrafter"/>
</dbReference>
<dbReference type="FunFam" id="3.40.50.12280:FF:000001">
    <property type="entry name" value="NADH-quinone oxidoreductase subunit B 2"/>
    <property type="match status" value="1"/>
</dbReference>
<dbReference type="Gene3D" id="3.40.50.12280">
    <property type="match status" value="1"/>
</dbReference>
<dbReference type="HAMAP" id="MF_01356">
    <property type="entry name" value="NDH1_NuoB"/>
    <property type="match status" value="1"/>
</dbReference>
<dbReference type="InterPro" id="IPR006137">
    <property type="entry name" value="NADH_UbQ_OxRdtase-like_20kDa"/>
</dbReference>
<dbReference type="InterPro" id="IPR006138">
    <property type="entry name" value="NADH_UQ_OxRdtase_20Kd_su"/>
</dbReference>
<dbReference type="NCBIfam" id="TIGR01957">
    <property type="entry name" value="nuoB_fam"/>
    <property type="match status" value="1"/>
</dbReference>
<dbReference type="NCBIfam" id="NF005012">
    <property type="entry name" value="PRK06411.1"/>
    <property type="match status" value="1"/>
</dbReference>
<dbReference type="PANTHER" id="PTHR11995">
    <property type="entry name" value="NADH DEHYDROGENASE"/>
    <property type="match status" value="1"/>
</dbReference>
<dbReference type="PANTHER" id="PTHR11995:SF14">
    <property type="entry name" value="NADH DEHYDROGENASE [UBIQUINONE] IRON-SULFUR PROTEIN 7, MITOCHONDRIAL"/>
    <property type="match status" value="1"/>
</dbReference>
<dbReference type="Pfam" id="PF01058">
    <property type="entry name" value="Oxidored_q6"/>
    <property type="match status" value="1"/>
</dbReference>
<dbReference type="SUPFAM" id="SSF56770">
    <property type="entry name" value="HydA/Nqo6-like"/>
    <property type="match status" value="1"/>
</dbReference>
<dbReference type="PROSITE" id="PS01150">
    <property type="entry name" value="COMPLEX1_20K"/>
    <property type="match status" value="1"/>
</dbReference>
<proteinExistence type="inferred from homology"/>